<sequence length="505" mass="58254">MSNICQRLWEYLEPYLPCLSTEADKSTVIENPGALCSPQSQRHGHYFVALFDYQARTAEDLSFRAGDKLQVLDTLHEGWWFARHLEKRRDGSSQQLQGYIPSNYVAEDRSLQAEPWFFGAIGRSDAEKQLLYSENKTGSFLIRESESQKGEFSLSVLDGAVVKHYRIKRLDEGGFFLTRRRIFSTLNEFVSHYTKTSDGLCVKLGKPCLKIQVPAPFDLSYKTVDQWEIDRNSIQLLKRLGSGQFGEVWEGLWNNTTPVAVKTLKPGSMDPNDFLREAQIMKNLRHPKLIQLYAVCTLEDPIYIITELMRHGSLQEYLQNDTGSKIHLTQQVDMAAQVASGMAYLESRNYIHRDLAARNVLVGEHNIYKVADFGLARVFKVDNEDIYESRHEIKLPVKWTAPEAIRSNKFSIKSDVWSFGILLYEIITYGKMPYSGMTGAQVIQMLAQNYRLPQPSNCPQQFYNIMLECWNAEPKERPTFETLRWKLEDYFETDSSYSDANNFIR</sequence>
<accession>P42685</accession>
<accession>B4DY49</accession>
<accession>Q13128</accession>
<accession>Q9NTR5</accession>
<keyword id="KW-0025">Alternative splicing</keyword>
<keyword id="KW-0067">ATP-binding</keyword>
<keyword id="KW-0963">Cytoplasm</keyword>
<keyword id="KW-0418">Kinase</keyword>
<keyword id="KW-0547">Nucleotide-binding</keyword>
<keyword id="KW-0539">Nucleus</keyword>
<keyword id="KW-0597">Phosphoprotein</keyword>
<keyword id="KW-1267">Proteomics identification</keyword>
<keyword id="KW-1185">Reference proteome</keyword>
<keyword id="KW-0727">SH2 domain</keyword>
<keyword id="KW-0728">SH3 domain</keyword>
<keyword id="KW-0808">Transferase</keyword>
<keyword id="KW-0043">Tumor suppressor</keyword>
<keyword id="KW-0829">Tyrosine-protein kinase</keyword>
<gene>
    <name type="primary">FRK</name>
    <name type="synonym">PTK5</name>
    <name type="synonym">RAK</name>
</gene>
<feature type="chain" id="PRO_0000088097" description="Tyrosine-protein kinase FRK">
    <location>
        <begin position="1"/>
        <end position="505"/>
    </location>
</feature>
<feature type="domain" description="SH3" evidence="4">
    <location>
        <begin position="42"/>
        <end position="110"/>
    </location>
</feature>
<feature type="domain" description="SH2" evidence="3">
    <location>
        <begin position="116"/>
        <end position="208"/>
    </location>
</feature>
<feature type="domain" description="Protein kinase" evidence="2">
    <location>
        <begin position="234"/>
        <end position="491"/>
    </location>
</feature>
<feature type="active site" description="Proton acceptor" evidence="2 5">
    <location>
        <position position="354"/>
    </location>
</feature>
<feature type="binding site" evidence="2">
    <location>
        <begin position="240"/>
        <end position="248"/>
    </location>
    <ligand>
        <name>ATP</name>
        <dbReference type="ChEBI" id="CHEBI:30616"/>
    </ligand>
</feature>
<feature type="binding site" evidence="2">
    <location>
        <position position="262"/>
    </location>
    <ligand>
        <name>ATP</name>
        <dbReference type="ChEBI" id="CHEBI:30616"/>
    </ligand>
</feature>
<feature type="modified residue" description="Phosphoserine" evidence="12">
    <location>
        <position position="37"/>
    </location>
</feature>
<feature type="modified residue" description="Phosphoserine" evidence="13">
    <location>
        <position position="40"/>
    </location>
</feature>
<feature type="modified residue" description="Phosphothreonine" evidence="13">
    <location>
        <position position="178"/>
    </location>
</feature>
<feature type="modified residue" description="Phosphotyrosine; by autocatalysis" evidence="1">
    <location>
        <position position="387"/>
    </location>
</feature>
<feature type="splice variant" id="VSP_056496" description="In isoform 2." evidence="10">
    <original>MSNICQRLWEYLE</original>
    <variation>MDSTSLLPNPWIR</variation>
    <location>
        <begin position="1"/>
        <end position="13"/>
    </location>
</feature>
<feature type="splice variant" id="VSP_056497" description="In isoform 2." evidence="10">
    <location>
        <begin position="14"/>
        <end position="155"/>
    </location>
</feature>
<feature type="sequence variant" id="VAR_041702" description="In dbSNP:rs34704018." evidence="6">
    <original>I</original>
    <variation>V</variation>
    <location>
        <position position="100"/>
    </location>
</feature>
<feature type="sequence variant" id="VAR_006283" description="In dbSNP:rs3756772." evidence="6">
    <original>G</original>
    <variation>R</variation>
    <location>
        <position position="122"/>
    </location>
</feature>
<feature type="sequence variant" id="VAR_041703" description="In dbSNP:rs34064900." evidence="6">
    <original>S</original>
    <variation>L</variation>
    <location>
        <position position="133"/>
    </location>
</feature>
<feature type="mutagenesis site" description="Loss of ability to phosphorylate PTEN." evidence="7">
    <original>K</original>
    <variation>R</variation>
    <location>
        <position position="262"/>
    </location>
</feature>
<feature type="sequence conflict" description="In Ref. 1; AAC50116." evidence="11" ref="1">
    <original>P</original>
    <variation>A</variation>
    <location>
        <position position="115"/>
    </location>
</feature>
<reference key="1">
    <citation type="journal article" date="1994" name="Cell Growth Differ.">
        <title>Rak, a novel nuclear tyrosine kinase expressed in epithelial cells.</title>
        <authorList>
            <person name="Cance W.G."/>
            <person name="Craven R.J."/>
            <person name="Bergman M."/>
            <person name="Xu L.H."/>
            <person name="Alitalo K."/>
            <person name="Liu E.T."/>
        </authorList>
    </citation>
    <scope>NUCLEOTIDE SEQUENCE [MRNA] (ISOFORM 1)</scope>
    <scope>TISSUE SPECIFICITY</scope>
    <scope>SUBCELLULAR LOCATION</scope>
</reference>
<reference key="2">
    <citation type="journal article" date="1994" name="Gene">
        <title>Cloning of FRK, a novel human intracellular SRC-like tyrosine kinase-encoding gene.</title>
        <authorList>
            <person name="Lee J."/>
            <person name="Wang Z."/>
            <person name="Luoh S.-M."/>
            <person name="Wood W.I."/>
            <person name="Scadden D.T."/>
        </authorList>
    </citation>
    <scope>NUCLEOTIDE SEQUENCE [MRNA] (ISOFORM 1)</scope>
    <source>
        <tissue>Lymphoid tissue</tissue>
    </source>
</reference>
<reference key="3">
    <citation type="journal article" date="2004" name="Nat. Genet.">
        <title>Complete sequencing and characterization of 21,243 full-length human cDNAs.</title>
        <authorList>
            <person name="Ota T."/>
            <person name="Suzuki Y."/>
            <person name="Nishikawa T."/>
            <person name="Otsuki T."/>
            <person name="Sugiyama T."/>
            <person name="Irie R."/>
            <person name="Wakamatsu A."/>
            <person name="Hayashi K."/>
            <person name="Sato H."/>
            <person name="Nagai K."/>
            <person name="Kimura K."/>
            <person name="Makita H."/>
            <person name="Sekine M."/>
            <person name="Obayashi M."/>
            <person name="Nishi T."/>
            <person name="Shibahara T."/>
            <person name="Tanaka T."/>
            <person name="Ishii S."/>
            <person name="Yamamoto J."/>
            <person name="Saito K."/>
            <person name="Kawai Y."/>
            <person name="Isono Y."/>
            <person name="Nakamura Y."/>
            <person name="Nagahari K."/>
            <person name="Murakami K."/>
            <person name="Yasuda T."/>
            <person name="Iwayanagi T."/>
            <person name="Wagatsuma M."/>
            <person name="Shiratori A."/>
            <person name="Sudo H."/>
            <person name="Hosoiri T."/>
            <person name="Kaku Y."/>
            <person name="Kodaira H."/>
            <person name="Kondo H."/>
            <person name="Sugawara M."/>
            <person name="Takahashi M."/>
            <person name="Kanda K."/>
            <person name="Yokoi T."/>
            <person name="Furuya T."/>
            <person name="Kikkawa E."/>
            <person name="Omura Y."/>
            <person name="Abe K."/>
            <person name="Kamihara K."/>
            <person name="Katsuta N."/>
            <person name="Sato K."/>
            <person name="Tanikawa M."/>
            <person name="Yamazaki M."/>
            <person name="Ninomiya K."/>
            <person name="Ishibashi T."/>
            <person name="Yamashita H."/>
            <person name="Murakawa K."/>
            <person name="Fujimori K."/>
            <person name="Tanai H."/>
            <person name="Kimata M."/>
            <person name="Watanabe M."/>
            <person name="Hiraoka S."/>
            <person name="Chiba Y."/>
            <person name="Ishida S."/>
            <person name="Ono Y."/>
            <person name="Takiguchi S."/>
            <person name="Watanabe S."/>
            <person name="Yosida M."/>
            <person name="Hotuta T."/>
            <person name="Kusano J."/>
            <person name="Kanehori K."/>
            <person name="Takahashi-Fujii A."/>
            <person name="Hara H."/>
            <person name="Tanase T.-O."/>
            <person name="Nomura Y."/>
            <person name="Togiya S."/>
            <person name="Komai F."/>
            <person name="Hara R."/>
            <person name="Takeuchi K."/>
            <person name="Arita M."/>
            <person name="Imose N."/>
            <person name="Musashino K."/>
            <person name="Yuuki H."/>
            <person name="Oshima A."/>
            <person name="Sasaki N."/>
            <person name="Aotsuka S."/>
            <person name="Yoshikawa Y."/>
            <person name="Matsunawa H."/>
            <person name="Ichihara T."/>
            <person name="Shiohata N."/>
            <person name="Sano S."/>
            <person name="Moriya S."/>
            <person name="Momiyama H."/>
            <person name="Satoh N."/>
            <person name="Takami S."/>
            <person name="Terashima Y."/>
            <person name="Suzuki O."/>
            <person name="Nakagawa S."/>
            <person name="Senoh A."/>
            <person name="Mizoguchi H."/>
            <person name="Goto Y."/>
            <person name="Shimizu F."/>
            <person name="Wakebe H."/>
            <person name="Hishigaki H."/>
            <person name="Watanabe T."/>
            <person name="Sugiyama A."/>
            <person name="Takemoto M."/>
            <person name="Kawakami B."/>
            <person name="Yamazaki M."/>
            <person name="Watanabe K."/>
            <person name="Kumagai A."/>
            <person name="Itakura S."/>
            <person name="Fukuzumi Y."/>
            <person name="Fujimori Y."/>
            <person name="Komiyama M."/>
            <person name="Tashiro H."/>
            <person name="Tanigami A."/>
            <person name="Fujiwara T."/>
            <person name="Ono T."/>
            <person name="Yamada K."/>
            <person name="Fujii Y."/>
            <person name="Ozaki K."/>
            <person name="Hirao M."/>
            <person name="Ohmori Y."/>
            <person name="Kawabata A."/>
            <person name="Hikiji T."/>
            <person name="Kobatake N."/>
            <person name="Inagaki H."/>
            <person name="Ikema Y."/>
            <person name="Okamoto S."/>
            <person name="Okitani R."/>
            <person name="Kawakami T."/>
            <person name="Noguchi S."/>
            <person name="Itoh T."/>
            <person name="Shigeta K."/>
            <person name="Senba T."/>
            <person name="Matsumura K."/>
            <person name="Nakajima Y."/>
            <person name="Mizuno T."/>
            <person name="Morinaga M."/>
            <person name="Sasaki M."/>
            <person name="Togashi T."/>
            <person name="Oyama M."/>
            <person name="Hata H."/>
            <person name="Watanabe M."/>
            <person name="Komatsu T."/>
            <person name="Mizushima-Sugano J."/>
            <person name="Satoh T."/>
            <person name="Shirai Y."/>
            <person name="Takahashi Y."/>
            <person name="Nakagawa K."/>
            <person name="Okumura K."/>
            <person name="Nagase T."/>
            <person name="Nomura N."/>
            <person name="Kikuchi H."/>
            <person name="Masuho Y."/>
            <person name="Yamashita R."/>
            <person name="Nakai K."/>
            <person name="Yada T."/>
            <person name="Nakamura Y."/>
            <person name="Ohara O."/>
            <person name="Isogai T."/>
            <person name="Sugano S."/>
        </authorList>
    </citation>
    <scope>NUCLEOTIDE SEQUENCE [LARGE SCALE MRNA] (ISOFORM 2)</scope>
    <source>
        <tissue>Testis</tissue>
    </source>
</reference>
<reference key="4">
    <citation type="journal article" date="2003" name="Nature">
        <title>The DNA sequence and analysis of human chromosome 6.</title>
        <authorList>
            <person name="Mungall A.J."/>
            <person name="Palmer S.A."/>
            <person name="Sims S.K."/>
            <person name="Edwards C.A."/>
            <person name="Ashurst J.L."/>
            <person name="Wilming L."/>
            <person name="Jones M.C."/>
            <person name="Horton R."/>
            <person name="Hunt S.E."/>
            <person name="Scott C.E."/>
            <person name="Gilbert J.G.R."/>
            <person name="Clamp M.E."/>
            <person name="Bethel G."/>
            <person name="Milne S."/>
            <person name="Ainscough R."/>
            <person name="Almeida J.P."/>
            <person name="Ambrose K.D."/>
            <person name="Andrews T.D."/>
            <person name="Ashwell R.I.S."/>
            <person name="Babbage A.K."/>
            <person name="Bagguley C.L."/>
            <person name="Bailey J."/>
            <person name="Banerjee R."/>
            <person name="Barker D.J."/>
            <person name="Barlow K.F."/>
            <person name="Bates K."/>
            <person name="Beare D.M."/>
            <person name="Beasley H."/>
            <person name="Beasley O."/>
            <person name="Bird C.P."/>
            <person name="Blakey S.E."/>
            <person name="Bray-Allen S."/>
            <person name="Brook J."/>
            <person name="Brown A.J."/>
            <person name="Brown J.Y."/>
            <person name="Burford D.C."/>
            <person name="Burrill W."/>
            <person name="Burton J."/>
            <person name="Carder C."/>
            <person name="Carter N.P."/>
            <person name="Chapman J.C."/>
            <person name="Clark S.Y."/>
            <person name="Clark G."/>
            <person name="Clee C.M."/>
            <person name="Clegg S."/>
            <person name="Cobley V."/>
            <person name="Collier R.E."/>
            <person name="Collins J.E."/>
            <person name="Colman L.K."/>
            <person name="Corby N.R."/>
            <person name="Coville G.J."/>
            <person name="Culley K.M."/>
            <person name="Dhami P."/>
            <person name="Davies J."/>
            <person name="Dunn M."/>
            <person name="Earthrowl M.E."/>
            <person name="Ellington A.E."/>
            <person name="Evans K.A."/>
            <person name="Faulkner L."/>
            <person name="Francis M.D."/>
            <person name="Frankish A."/>
            <person name="Frankland J."/>
            <person name="French L."/>
            <person name="Garner P."/>
            <person name="Garnett J."/>
            <person name="Ghori M.J."/>
            <person name="Gilby L.M."/>
            <person name="Gillson C.J."/>
            <person name="Glithero R.J."/>
            <person name="Grafham D.V."/>
            <person name="Grant M."/>
            <person name="Gribble S."/>
            <person name="Griffiths C."/>
            <person name="Griffiths M.N.D."/>
            <person name="Hall R."/>
            <person name="Halls K.S."/>
            <person name="Hammond S."/>
            <person name="Harley J.L."/>
            <person name="Hart E.A."/>
            <person name="Heath P.D."/>
            <person name="Heathcott R."/>
            <person name="Holmes S.J."/>
            <person name="Howden P.J."/>
            <person name="Howe K.L."/>
            <person name="Howell G.R."/>
            <person name="Huckle E."/>
            <person name="Humphray S.J."/>
            <person name="Humphries M.D."/>
            <person name="Hunt A.R."/>
            <person name="Johnson C.M."/>
            <person name="Joy A.A."/>
            <person name="Kay M."/>
            <person name="Keenan S.J."/>
            <person name="Kimberley A.M."/>
            <person name="King A."/>
            <person name="Laird G.K."/>
            <person name="Langford C."/>
            <person name="Lawlor S."/>
            <person name="Leongamornlert D.A."/>
            <person name="Leversha M."/>
            <person name="Lloyd C.R."/>
            <person name="Lloyd D.M."/>
            <person name="Loveland J.E."/>
            <person name="Lovell J."/>
            <person name="Martin S."/>
            <person name="Mashreghi-Mohammadi M."/>
            <person name="Maslen G.L."/>
            <person name="Matthews L."/>
            <person name="McCann O.T."/>
            <person name="McLaren S.J."/>
            <person name="McLay K."/>
            <person name="McMurray A."/>
            <person name="Moore M.J.F."/>
            <person name="Mullikin J.C."/>
            <person name="Niblett D."/>
            <person name="Nickerson T."/>
            <person name="Novik K.L."/>
            <person name="Oliver K."/>
            <person name="Overton-Larty E.K."/>
            <person name="Parker A."/>
            <person name="Patel R."/>
            <person name="Pearce A.V."/>
            <person name="Peck A.I."/>
            <person name="Phillimore B.J.C.T."/>
            <person name="Phillips S."/>
            <person name="Plumb R.W."/>
            <person name="Porter K.M."/>
            <person name="Ramsey Y."/>
            <person name="Ranby S.A."/>
            <person name="Rice C.M."/>
            <person name="Ross M.T."/>
            <person name="Searle S.M."/>
            <person name="Sehra H.K."/>
            <person name="Sheridan E."/>
            <person name="Skuce C.D."/>
            <person name="Smith S."/>
            <person name="Smith M."/>
            <person name="Spraggon L."/>
            <person name="Squares S.L."/>
            <person name="Steward C.A."/>
            <person name="Sycamore N."/>
            <person name="Tamlyn-Hall G."/>
            <person name="Tester J."/>
            <person name="Theaker A.J."/>
            <person name="Thomas D.W."/>
            <person name="Thorpe A."/>
            <person name="Tracey A."/>
            <person name="Tromans A."/>
            <person name="Tubby B."/>
            <person name="Wall M."/>
            <person name="Wallis J.M."/>
            <person name="West A.P."/>
            <person name="White S.S."/>
            <person name="Whitehead S.L."/>
            <person name="Whittaker H."/>
            <person name="Wild A."/>
            <person name="Willey D.J."/>
            <person name="Wilmer T.E."/>
            <person name="Wood J.M."/>
            <person name="Wray P.W."/>
            <person name="Wyatt J.C."/>
            <person name="Young L."/>
            <person name="Younger R.M."/>
            <person name="Bentley D.R."/>
            <person name="Coulson A."/>
            <person name="Durbin R.M."/>
            <person name="Hubbard T."/>
            <person name="Sulston J.E."/>
            <person name="Dunham I."/>
            <person name="Rogers J."/>
            <person name="Beck S."/>
        </authorList>
    </citation>
    <scope>NUCLEOTIDE SEQUENCE [LARGE SCALE GENOMIC DNA]</scope>
</reference>
<reference key="5">
    <citation type="submission" date="2005-09" db="EMBL/GenBank/DDBJ databases">
        <authorList>
            <person name="Mural R.J."/>
            <person name="Istrail S."/>
            <person name="Sutton G.G."/>
            <person name="Florea L."/>
            <person name="Halpern A.L."/>
            <person name="Mobarry C.M."/>
            <person name="Lippert R."/>
            <person name="Walenz B."/>
            <person name="Shatkay H."/>
            <person name="Dew I."/>
            <person name="Miller J.R."/>
            <person name="Flanigan M.J."/>
            <person name="Edwards N.J."/>
            <person name="Bolanos R."/>
            <person name="Fasulo D."/>
            <person name="Halldorsson B.V."/>
            <person name="Hannenhalli S."/>
            <person name="Turner R."/>
            <person name="Yooseph S."/>
            <person name="Lu F."/>
            <person name="Nusskern D.R."/>
            <person name="Shue B.C."/>
            <person name="Zheng X.H."/>
            <person name="Zhong F."/>
            <person name="Delcher A.L."/>
            <person name="Huson D.H."/>
            <person name="Kravitz S.A."/>
            <person name="Mouchard L."/>
            <person name="Reinert K."/>
            <person name="Remington K.A."/>
            <person name="Clark A.G."/>
            <person name="Waterman M.S."/>
            <person name="Eichler E.E."/>
            <person name="Adams M.D."/>
            <person name="Hunkapiller M.W."/>
            <person name="Myers E.W."/>
            <person name="Venter J.C."/>
        </authorList>
    </citation>
    <scope>NUCLEOTIDE SEQUENCE [LARGE SCALE GENOMIC DNA]</scope>
</reference>
<reference key="6">
    <citation type="journal article" date="2004" name="Genome Res.">
        <title>The status, quality, and expansion of the NIH full-length cDNA project: the Mammalian Gene Collection (MGC).</title>
        <authorList>
            <consortium name="The MGC Project Team"/>
        </authorList>
    </citation>
    <scope>NUCLEOTIDE SEQUENCE [LARGE SCALE MRNA] (ISOFORM 1)</scope>
    <source>
        <tissue>Urinary bladder</tissue>
    </source>
</reference>
<reference key="7">
    <citation type="journal article" date="1993" name="Int. J. Cancer">
        <title>Novel protein kinases expressed in human breast cancer.</title>
        <authorList>
            <person name="Cance W.G."/>
            <person name="Craven R.J."/>
            <person name="Weiner T.M."/>
            <person name="Liu E.T."/>
        </authorList>
    </citation>
    <scope>PARTIAL NUCLEOTIDE SEQUENCE [MRNA]</scope>
</reference>
<reference key="8">
    <citation type="journal article" date="1995" name="Cancer Res.">
        <title>The nuclear tyrosine kinase Rak associates with the retinoblastoma protein pRb.</title>
        <authorList>
            <person name="Craven R.J."/>
            <person name="Cance W.G."/>
            <person name="Liu E.T."/>
        </authorList>
    </citation>
    <scope>INTERACTION WITH RB1</scope>
</reference>
<reference key="9">
    <citation type="journal article" date="2008" name="Mol. Cell">
        <title>Kinase-selective enrichment enables quantitative phosphoproteomics of the kinome across the cell cycle.</title>
        <authorList>
            <person name="Daub H."/>
            <person name="Olsen J.V."/>
            <person name="Bairlein M."/>
            <person name="Gnad F."/>
            <person name="Oppermann F.S."/>
            <person name="Korner R."/>
            <person name="Greff Z."/>
            <person name="Keri G."/>
            <person name="Stemmann O."/>
            <person name="Mann M."/>
        </authorList>
    </citation>
    <scope>PHOSPHORYLATION [LARGE SCALE ANALYSIS] AT SER-37</scope>
    <scope>IDENTIFICATION BY MASS SPECTROMETRY [LARGE SCALE ANALYSIS]</scope>
    <source>
        <tissue>Cervix carcinoma</tissue>
    </source>
</reference>
<reference key="10">
    <citation type="journal article" date="2009" name="Cancer Cell">
        <title>Rak functions as a tumor suppressor by regulating PTEN protein stability and function.</title>
        <authorList>
            <person name="Yim E.-K."/>
            <person name="Peng G."/>
            <person name="Dai H."/>
            <person name="Hu R."/>
            <person name="Li K."/>
            <person name="Lu Y."/>
            <person name="Mills G.B."/>
            <person name="Meric-Bernstam F."/>
            <person name="Hennessy B.T."/>
            <person name="Craven R.J."/>
            <person name="Lin S.-Y."/>
        </authorList>
    </citation>
    <scope>FUNCTION</scope>
    <scope>INTERACTION WITH PTEN</scope>
    <scope>MUTAGENESIS OF LYS-262</scope>
</reference>
<reference key="11">
    <citation type="journal article" date="2009" name="Cell Cycle">
        <title>RAKing in AKT: a tumor suppressor function for the intracellular tyrosine kinase FRK.</title>
        <authorList>
            <person name="Brauer P.M."/>
            <person name="Tyner A.L."/>
        </authorList>
    </citation>
    <scope>REVIEW ON FUNCTION</scope>
</reference>
<reference key="12">
    <citation type="journal article" date="2014" name="J. Proteomics">
        <title>An enzyme assisted RP-RPLC approach for in-depth analysis of human liver phosphoproteome.</title>
        <authorList>
            <person name="Bian Y."/>
            <person name="Song C."/>
            <person name="Cheng K."/>
            <person name="Dong M."/>
            <person name="Wang F."/>
            <person name="Huang J."/>
            <person name="Sun D."/>
            <person name="Wang L."/>
            <person name="Ye M."/>
            <person name="Zou H."/>
        </authorList>
    </citation>
    <scope>PHOSPHORYLATION [LARGE SCALE ANALYSIS] AT SER-40 AND THR-178</scope>
    <scope>IDENTIFICATION BY MASS SPECTROMETRY [LARGE SCALE ANALYSIS]</scope>
    <source>
        <tissue>Liver</tissue>
    </source>
</reference>
<reference key="13">
    <citation type="journal article" date="2007" name="Nature">
        <title>Patterns of somatic mutation in human cancer genomes.</title>
        <authorList>
            <person name="Greenman C."/>
            <person name="Stephens P."/>
            <person name="Smith R."/>
            <person name="Dalgliesh G.L."/>
            <person name="Hunter C."/>
            <person name="Bignell G."/>
            <person name="Davies H."/>
            <person name="Teague J."/>
            <person name="Butler A."/>
            <person name="Stevens C."/>
            <person name="Edkins S."/>
            <person name="O'Meara S."/>
            <person name="Vastrik I."/>
            <person name="Schmidt E.E."/>
            <person name="Avis T."/>
            <person name="Barthorpe S."/>
            <person name="Bhamra G."/>
            <person name="Buck G."/>
            <person name="Choudhury B."/>
            <person name="Clements J."/>
            <person name="Cole J."/>
            <person name="Dicks E."/>
            <person name="Forbes S."/>
            <person name="Gray K."/>
            <person name="Halliday K."/>
            <person name="Harrison R."/>
            <person name="Hills K."/>
            <person name="Hinton J."/>
            <person name="Jenkinson A."/>
            <person name="Jones D."/>
            <person name="Menzies A."/>
            <person name="Mironenko T."/>
            <person name="Perry J."/>
            <person name="Raine K."/>
            <person name="Richardson D."/>
            <person name="Shepherd R."/>
            <person name="Small A."/>
            <person name="Tofts C."/>
            <person name="Varian J."/>
            <person name="Webb T."/>
            <person name="West S."/>
            <person name="Widaa S."/>
            <person name="Yates A."/>
            <person name="Cahill D.P."/>
            <person name="Louis D.N."/>
            <person name="Goldstraw P."/>
            <person name="Nicholson A.G."/>
            <person name="Brasseur F."/>
            <person name="Looijenga L."/>
            <person name="Weber B.L."/>
            <person name="Chiew Y.-E."/>
            <person name="DeFazio A."/>
            <person name="Greaves M.F."/>
            <person name="Green A.R."/>
            <person name="Campbell P."/>
            <person name="Birney E."/>
            <person name="Easton D.F."/>
            <person name="Chenevix-Trench G."/>
            <person name="Tan M.-H."/>
            <person name="Khoo S.K."/>
            <person name="Teh B.T."/>
            <person name="Yuen S.T."/>
            <person name="Leung S.Y."/>
            <person name="Wooster R."/>
            <person name="Futreal P.A."/>
            <person name="Stratton M.R."/>
        </authorList>
    </citation>
    <scope>VARIANTS [LARGE SCALE ANALYSIS] VAL-100; ARG-122 AND LEU-133</scope>
</reference>
<organism>
    <name type="scientific">Homo sapiens</name>
    <name type="common">Human</name>
    <dbReference type="NCBI Taxonomy" id="9606"/>
    <lineage>
        <taxon>Eukaryota</taxon>
        <taxon>Metazoa</taxon>
        <taxon>Chordata</taxon>
        <taxon>Craniata</taxon>
        <taxon>Vertebrata</taxon>
        <taxon>Euteleostomi</taxon>
        <taxon>Mammalia</taxon>
        <taxon>Eutheria</taxon>
        <taxon>Euarchontoglires</taxon>
        <taxon>Primates</taxon>
        <taxon>Haplorrhini</taxon>
        <taxon>Catarrhini</taxon>
        <taxon>Hominidae</taxon>
        <taxon>Homo</taxon>
    </lineage>
</organism>
<evidence type="ECO:0000250" key="1">
    <source>
        <dbReference type="UniProtKB" id="Q922K9"/>
    </source>
</evidence>
<evidence type="ECO:0000255" key="2">
    <source>
        <dbReference type="PROSITE-ProRule" id="PRU00159"/>
    </source>
</evidence>
<evidence type="ECO:0000255" key="3">
    <source>
        <dbReference type="PROSITE-ProRule" id="PRU00191"/>
    </source>
</evidence>
<evidence type="ECO:0000255" key="4">
    <source>
        <dbReference type="PROSITE-ProRule" id="PRU00192"/>
    </source>
</evidence>
<evidence type="ECO:0000255" key="5">
    <source>
        <dbReference type="PROSITE-ProRule" id="PRU10028"/>
    </source>
</evidence>
<evidence type="ECO:0000269" key="6">
    <source>
    </source>
</evidence>
<evidence type="ECO:0000269" key="7">
    <source>
    </source>
</evidence>
<evidence type="ECO:0000269" key="8">
    <source>
    </source>
</evidence>
<evidence type="ECO:0000269" key="9">
    <source>
    </source>
</evidence>
<evidence type="ECO:0000303" key="10">
    <source>
    </source>
</evidence>
<evidence type="ECO:0000305" key="11"/>
<evidence type="ECO:0007744" key="12">
    <source>
    </source>
</evidence>
<evidence type="ECO:0007744" key="13">
    <source>
    </source>
</evidence>
<dbReference type="EC" id="2.7.10.2"/>
<dbReference type="EMBL" id="U22322">
    <property type="protein sequence ID" value="AAC50116.1"/>
    <property type="molecule type" value="mRNA"/>
</dbReference>
<dbReference type="EMBL" id="U00803">
    <property type="protein sequence ID" value="AAA18284.1"/>
    <property type="molecule type" value="mRNA"/>
</dbReference>
<dbReference type="EMBL" id="AK302264">
    <property type="protein sequence ID" value="BAG63611.1"/>
    <property type="molecule type" value="mRNA"/>
</dbReference>
<dbReference type="EMBL" id="AL021451">
    <property type="status" value="NOT_ANNOTATED_CDS"/>
    <property type="molecule type" value="Genomic_DNA"/>
</dbReference>
<dbReference type="EMBL" id="AL121963">
    <property type="status" value="NOT_ANNOTATED_CDS"/>
    <property type="molecule type" value="Genomic_DNA"/>
</dbReference>
<dbReference type="EMBL" id="AL357141">
    <property type="status" value="NOT_ANNOTATED_CDS"/>
    <property type="molecule type" value="Genomic_DNA"/>
</dbReference>
<dbReference type="EMBL" id="CH471051">
    <property type="protein sequence ID" value="EAW48241.1"/>
    <property type="molecule type" value="Genomic_DNA"/>
</dbReference>
<dbReference type="EMBL" id="BC012916">
    <property type="protein sequence ID" value="AAH12916.1"/>
    <property type="molecule type" value="mRNA"/>
</dbReference>
<dbReference type="CCDS" id="CCDS5103.1">
    <molecule id="P42685-1"/>
</dbReference>
<dbReference type="PIR" id="I38396">
    <property type="entry name" value="I38396"/>
</dbReference>
<dbReference type="RefSeq" id="NP_002022.1">
    <molecule id="P42685-1"/>
    <property type="nucleotide sequence ID" value="NM_002031.3"/>
</dbReference>
<dbReference type="RefSeq" id="XP_005266937.1">
    <molecule id="P42685-1"/>
    <property type="nucleotide sequence ID" value="XM_005266880.5"/>
</dbReference>
<dbReference type="RefSeq" id="XP_005266938.1">
    <molecule id="P42685-1"/>
    <property type="nucleotide sequence ID" value="XM_005266881.3"/>
</dbReference>
<dbReference type="RefSeq" id="XP_005266939.1">
    <property type="nucleotide sequence ID" value="XM_005266882.4"/>
</dbReference>
<dbReference type="RefSeq" id="XP_011533955.1">
    <property type="nucleotide sequence ID" value="XM_011535653.2"/>
</dbReference>
<dbReference type="RefSeq" id="XP_011533956.1">
    <molecule id="P42685-1"/>
    <property type="nucleotide sequence ID" value="XM_011535654.3"/>
</dbReference>
<dbReference type="RefSeq" id="XP_011533957.1">
    <molecule id="P42685-1"/>
    <property type="nucleotide sequence ID" value="XM_011535655.3"/>
</dbReference>
<dbReference type="RefSeq" id="XP_016866134.1">
    <molecule id="P42685-1"/>
    <property type="nucleotide sequence ID" value="XM_017010645.2"/>
</dbReference>
<dbReference type="RefSeq" id="XP_047274510.1">
    <molecule id="P42685-1"/>
    <property type="nucleotide sequence ID" value="XM_047418554.1"/>
</dbReference>
<dbReference type="RefSeq" id="XP_047274511.1">
    <molecule id="P42685-1"/>
    <property type="nucleotide sequence ID" value="XM_047418555.1"/>
</dbReference>
<dbReference type="RefSeq" id="XP_054210960.1">
    <molecule id="P42685-1"/>
    <property type="nucleotide sequence ID" value="XM_054354985.1"/>
</dbReference>
<dbReference type="RefSeq" id="XP_054210961.1">
    <molecule id="P42685-1"/>
    <property type="nucleotide sequence ID" value="XM_054354986.1"/>
</dbReference>
<dbReference type="RefSeq" id="XP_054210962.1">
    <molecule id="P42685-1"/>
    <property type="nucleotide sequence ID" value="XM_054354987.1"/>
</dbReference>
<dbReference type="RefSeq" id="XP_054210963.1">
    <molecule id="P42685-1"/>
    <property type="nucleotide sequence ID" value="XM_054354988.1"/>
</dbReference>
<dbReference type="RefSeq" id="XP_054210964.1">
    <molecule id="P42685-1"/>
    <property type="nucleotide sequence ID" value="XM_054354989.1"/>
</dbReference>
<dbReference type="RefSeq" id="XP_054210965.1">
    <molecule id="P42685-1"/>
    <property type="nucleotide sequence ID" value="XM_054354990.1"/>
</dbReference>
<dbReference type="RefSeq" id="XP_054210966.1">
    <molecule id="P42685-1"/>
    <property type="nucleotide sequence ID" value="XM_054354991.1"/>
</dbReference>
<dbReference type="SMR" id="P42685"/>
<dbReference type="BioGRID" id="108726">
    <property type="interactions" value="49"/>
</dbReference>
<dbReference type="FunCoup" id="P42685">
    <property type="interactions" value="1064"/>
</dbReference>
<dbReference type="IntAct" id="P42685">
    <property type="interactions" value="44"/>
</dbReference>
<dbReference type="MINT" id="P42685"/>
<dbReference type="STRING" id="9606.ENSP00000476145"/>
<dbReference type="BindingDB" id="P42685"/>
<dbReference type="ChEMBL" id="CHEMBL4223"/>
<dbReference type="DrugBank" id="DB01254">
    <property type="generic name" value="Dasatinib"/>
</dbReference>
<dbReference type="DrugBank" id="DB12010">
    <property type="generic name" value="Fostamatinib"/>
</dbReference>
<dbReference type="DrugBank" id="DB08896">
    <property type="generic name" value="Regorafenib"/>
</dbReference>
<dbReference type="DrugBank" id="DB15035">
    <property type="generic name" value="Zanubrutinib"/>
</dbReference>
<dbReference type="DrugCentral" id="P42685"/>
<dbReference type="GuidetoPHARMACOLOGY" id="2025"/>
<dbReference type="iPTMnet" id="P42685"/>
<dbReference type="PhosphoSitePlus" id="P42685"/>
<dbReference type="SwissPalm" id="P42685"/>
<dbReference type="BioMuta" id="FRK"/>
<dbReference type="DMDM" id="1169745"/>
<dbReference type="CPTAC" id="CPTAC-2793"/>
<dbReference type="CPTAC" id="CPTAC-3140"/>
<dbReference type="CPTAC" id="CPTAC-3141"/>
<dbReference type="jPOST" id="P42685"/>
<dbReference type="MassIVE" id="P42685"/>
<dbReference type="PaxDb" id="9606-ENSP00000476145"/>
<dbReference type="PeptideAtlas" id="P42685"/>
<dbReference type="ProteomicsDB" id="5498"/>
<dbReference type="ProteomicsDB" id="55538">
    <molecule id="P42685-1"/>
</dbReference>
<dbReference type="TopDownProteomics" id="P42685-1">
    <molecule id="P42685-1"/>
</dbReference>
<dbReference type="Antibodypedia" id="32472">
    <property type="antibodies" value="578 antibodies from 36 providers"/>
</dbReference>
<dbReference type="DNASU" id="2444"/>
<dbReference type="Ensembl" id="ENST00000606080.2">
    <molecule id="P42685-1"/>
    <property type="protein sequence ID" value="ENSP00000476145.1"/>
    <property type="gene ID" value="ENSG00000111816.8"/>
</dbReference>
<dbReference type="GeneID" id="2444"/>
<dbReference type="KEGG" id="hsa:2444"/>
<dbReference type="MANE-Select" id="ENST00000606080.2">
    <property type="protein sequence ID" value="ENSP00000476145.1"/>
    <property type="RefSeq nucleotide sequence ID" value="NM_002031.3"/>
    <property type="RefSeq protein sequence ID" value="NP_002022.1"/>
</dbReference>
<dbReference type="UCSC" id="uc003pwi.2">
    <molecule id="P42685-1"/>
    <property type="organism name" value="human"/>
</dbReference>
<dbReference type="AGR" id="HGNC:3955"/>
<dbReference type="CTD" id="2444"/>
<dbReference type="DisGeNET" id="2444"/>
<dbReference type="GeneCards" id="FRK"/>
<dbReference type="HGNC" id="HGNC:3955">
    <property type="gene designation" value="FRK"/>
</dbReference>
<dbReference type="HPA" id="ENSG00000111816">
    <property type="expression patterns" value="Low tissue specificity"/>
</dbReference>
<dbReference type="MalaCards" id="FRK"/>
<dbReference type="MIM" id="606573">
    <property type="type" value="gene"/>
</dbReference>
<dbReference type="neXtProt" id="NX_P42685"/>
<dbReference type="OpenTargets" id="ENSG00000111816"/>
<dbReference type="PharmGKB" id="PA28373"/>
<dbReference type="VEuPathDB" id="HostDB:ENSG00000111816"/>
<dbReference type="eggNOG" id="KOG0197">
    <property type="taxonomic scope" value="Eukaryota"/>
</dbReference>
<dbReference type="GeneTree" id="ENSGT00940000156987"/>
<dbReference type="HOGENOM" id="CLU_000288_7_2_1"/>
<dbReference type="InParanoid" id="P42685"/>
<dbReference type="OMA" id="SSHEGWW"/>
<dbReference type="OrthoDB" id="4062651at2759"/>
<dbReference type="PAN-GO" id="P42685">
    <property type="GO annotations" value="6 GO annotations based on evolutionary models"/>
</dbReference>
<dbReference type="PhylomeDB" id="P42685"/>
<dbReference type="TreeFam" id="TF351634"/>
<dbReference type="BRENDA" id="2.7.10.2">
    <property type="organism ID" value="2681"/>
</dbReference>
<dbReference type="PathwayCommons" id="P42685"/>
<dbReference type="Reactome" id="R-HSA-6798695">
    <property type="pathway name" value="Neutrophil degranulation"/>
</dbReference>
<dbReference type="Reactome" id="R-HSA-8948751">
    <property type="pathway name" value="Regulation of PTEN stability and activity"/>
</dbReference>
<dbReference type="SignaLink" id="P42685"/>
<dbReference type="SIGNOR" id="P42685"/>
<dbReference type="BioGRID-ORCS" id="2444">
    <property type="hits" value="6 hits in 1187 CRISPR screens"/>
</dbReference>
<dbReference type="ChiTaRS" id="FRK">
    <property type="organism name" value="human"/>
</dbReference>
<dbReference type="GeneWiki" id="Fyn-related_kinase"/>
<dbReference type="GenomeRNAi" id="2444"/>
<dbReference type="Pharos" id="P42685">
    <property type="development level" value="Tchem"/>
</dbReference>
<dbReference type="PRO" id="PR:P42685"/>
<dbReference type="Proteomes" id="UP000005640">
    <property type="component" value="Chromosome 6"/>
</dbReference>
<dbReference type="RNAct" id="P42685">
    <property type="molecule type" value="protein"/>
</dbReference>
<dbReference type="Bgee" id="ENSG00000111816">
    <property type="expression patterns" value="Expressed in jejunal mucosa and 159 other cell types or tissues"/>
</dbReference>
<dbReference type="GO" id="GO:0035578">
    <property type="term" value="C:azurophil granule lumen"/>
    <property type="evidence" value="ECO:0000304"/>
    <property type="project" value="Reactome"/>
</dbReference>
<dbReference type="GO" id="GO:0005737">
    <property type="term" value="C:cytoplasm"/>
    <property type="evidence" value="ECO:0000314"/>
    <property type="project" value="UniProt"/>
</dbReference>
<dbReference type="GO" id="GO:0005829">
    <property type="term" value="C:cytosol"/>
    <property type="evidence" value="ECO:0000314"/>
    <property type="project" value="HPA"/>
</dbReference>
<dbReference type="GO" id="GO:0070062">
    <property type="term" value="C:extracellular exosome"/>
    <property type="evidence" value="ECO:0007005"/>
    <property type="project" value="UniProtKB"/>
</dbReference>
<dbReference type="GO" id="GO:0005576">
    <property type="term" value="C:extracellular region"/>
    <property type="evidence" value="ECO:0000304"/>
    <property type="project" value="Reactome"/>
</dbReference>
<dbReference type="GO" id="GO:0005654">
    <property type="term" value="C:nucleoplasm"/>
    <property type="evidence" value="ECO:0000314"/>
    <property type="project" value="HPA"/>
</dbReference>
<dbReference type="GO" id="GO:0005634">
    <property type="term" value="C:nucleus"/>
    <property type="evidence" value="ECO:0000304"/>
    <property type="project" value="ProtInc"/>
</dbReference>
<dbReference type="GO" id="GO:0005886">
    <property type="term" value="C:plasma membrane"/>
    <property type="evidence" value="ECO:0000318"/>
    <property type="project" value="GO_Central"/>
</dbReference>
<dbReference type="GO" id="GO:0035580">
    <property type="term" value="C:specific granule lumen"/>
    <property type="evidence" value="ECO:0000304"/>
    <property type="project" value="Reactome"/>
</dbReference>
<dbReference type="GO" id="GO:0005524">
    <property type="term" value="F:ATP binding"/>
    <property type="evidence" value="ECO:0007669"/>
    <property type="project" value="UniProtKB-KW"/>
</dbReference>
<dbReference type="GO" id="GO:0004715">
    <property type="term" value="F:non-membrane spanning protein tyrosine kinase activity"/>
    <property type="evidence" value="ECO:0000318"/>
    <property type="project" value="GO_Central"/>
</dbReference>
<dbReference type="GO" id="GO:0004713">
    <property type="term" value="F:protein tyrosine kinase activity"/>
    <property type="evidence" value="ECO:0000314"/>
    <property type="project" value="UniProt"/>
</dbReference>
<dbReference type="GO" id="GO:0005102">
    <property type="term" value="F:signaling receptor binding"/>
    <property type="evidence" value="ECO:0000318"/>
    <property type="project" value="GO_Central"/>
</dbReference>
<dbReference type="GO" id="GO:0030154">
    <property type="term" value="P:cell differentiation"/>
    <property type="evidence" value="ECO:0000318"/>
    <property type="project" value="GO_Central"/>
</dbReference>
<dbReference type="GO" id="GO:0007169">
    <property type="term" value="P:cell surface receptor protein tyrosine kinase signaling pathway"/>
    <property type="evidence" value="ECO:0000318"/>
    <property type="project" value="GO_Central"/>
</dbReference>
<dbReference type="GO" id="GO:0000122">
    <property type="term" value="P:negative regulation of transcription by RNA polymerase II"/>
    <property type="evidence" value="ECO:0000314"/>
    <property type="project" value="BHF-UCL"/>
</dbReference>
<dbReference type="CDD" id="cd05068">
    <property type="entry name" value="PTKc_Frk_like"/>
    <property type="match status" value="1"/>
</dbReference>
<dbReference type="CDD" id="cd10369">
    <property type="entry name" value="SH2_Src_Frk"/>
    <property type="match status" value="1"/>
</dbReference>
<dbReference type="CDD" id="cd11845">
    <property type="entry name" value="SH3_Src_like"/>
    <property type="match status" value="1"/>
</dbReference>
<dbReference type="FunFam" id="1.10.510.10:FF:000630">
    <property type="entry name" value="Tyrosine-protein kinase"/>
    <property type="match status" value="1"/>
</dbReference>
<dbReference type="FunFam" id="2.30.30.40:FF:000217">
    <property type="entry name" value="Tyrosine-protein kinase"/>
    <property type="match status" value="1"/>
</dbReference>
<dbReference type="FunFam" id="3.30.200.20:FF:000037">
    <property type="entry name" value="Tyrosine-protein kinase"/>
    <property type="match status" value="1"/>
</dbReference>
<dbReference type="FunFam" id="3.30.505.10:FF:000044">
    <property type="entry name" value="Tyrosine-protein kinase"/>
    <property type="match status" value="1"/>
</dbReference>
<dbReference type="Gene3D" id="3.30.200.20">
    <property type="entry name" value="Phosphorylase Kinase, domain 1"/>
    <property type="match status" value="1"/>
</dbReference>
<dbReference type="Gene3D" id="3.30.505.10">
    <property type="entry name" value="SH2 domain"/>
    <property type="match status" value="1"/>
</dbReference>
<dbReference type="Gene3D" id="2.30.30.40">
    <property type="entry name" value="SH3 Domains"/>
    <property type="match status" value="1"/>
</dbReference>
<dbReference type="Gene3D" id="1.10.510.10">
    <property type="entry name" value="Transferase(Phosphotransferase) domain 1"/>
    <property type="match status" value="1"/>
</dbReference>
<dbReference type="InterPro" id="IPR011009">
    <property type="entry name" value="Kinase-like_dom_sf"/>
</dbReference>
<dbReference type="InterPro" id="IPR050198">
    <property type="entry name" value="Non-receptor_tyrosine_kinases"/>
</dbReference>
<dbReference type="InterPro" id="IPR000719">
    <property type="entry name" value="Prot_kinase_dom"/>
</dbReference>
<dbReference type="InterPro" id="IPR017441">
    <property type="entry name" value="Protein_kinase_ATP_BS"/>
</dbReference>
<dbReference type="InterPro" id="IPR001245">
    <property type="entry name" value="Ser-Thr/Tyr_kinase_cat_dom"/>
</dbReference>
<dbReference type="InterPro" id="IPR000980">
    <property type="entry name" value="SH2"/>
</dbReference>
<dbReference type="InterPro" id="IPR036860">
    <property type="entry name" value="SH2_dom_sf"/>
</dbReference>
<dbReference type="InterPro" id="IPR035805">
    <property type="entry name" value="SH2_Frk"/>
</dbReference>
<dbReference type="InterPro" id="IPR036028">
    <property type="entry name" value="SH3-like_dom_sf"/>
</dbReference>
<dbReference type="InterPro" id="IPR001452">
    <property type="entry name" value="SH3_domain"/>
</dbReference>
<dbReference type="InterPro" id="IPR008266">
    <property type="entry name" value="Tyr_kinase_AS"/>
</dbReference>
<dbReference type="InterPro" id="IPR020635">
    <property type="entry name" value="Tyr_kinase_cat_dom"/>
</dbReference>
<dbReference type="PANTHER" id="PTHR24418">
    <property type="entry name" value="TYROSINE-PROTEIN KINASE"/>
    <property type="match status" value="1"/>
</dbReference>
<dbReference type="Pfam" id="PF07714">
    <property type="entry name" value="PK_Tyr_Ser-Thr"/>
    <property type="match status" value="1"/>
</dbReference>
<dbReference type="Pfam" id="PF00017">
    <property type="entry name" value="SH2"/>
    <property type="match status" value="1"/>
</dbReference>
<dbReference type="Pfam" id="PF00018">
    <property type="entry name" value="SH3_1"/>
    <property type="match status" value="1"/>
</dbReference>
<dbReference type="PRINTS" id="PR00401">
    <property type="entry name" value="SH2DOMAIN"/>
</dbReference>
<dbReference type="PRINTS" id="PR00452">
    <property type="entry name" value="SH3DOMAIN"/>
</dbReference>
<dbReference type="PRINTS" id="PR00109">
    <property type="entry name" value="TYRKINASE"/>
</dbReference>
<dbReference type="SMART" id="SM00252">
    <property type="entry name" value="SH2"/>
    <property type="match status" value="1"/>
</dbReference>
<dbReference type="SMART" id="SM00326">
    <property type="entry name" value="SH3"/>
    <property type="match status" value="1"/>
</dbReference>
<dbReference type="SMART" id="SM00219">
    <property type="entry name" value="TyrKc"/>
    <property type="match status" value="1"/>
</dbReference>
<dbReference type="SUPFAM" id="SSF56112">
    <property type="entry name" value="Protein kinase-like (PK-like)"/>
    <property type="match status" value="1"/>
</dbReference>
<dbReference type="SUPFAM" id="SSF55550">
    <property type="entry name" value="SH2 domain"/>
    <property type="match status" value="1"/>
</dbReference>
<dbReference type="SUPFAM" id="SSF50044">
    <property type="entry name" value="SH3-domain"/>
    <property type="match status" value="1"/>
</dbReference>
<dbReference type="PROSITE" id="PS00107">
    <property type="entry name" value="PROTEIN_KINASE_ATP"/>
    <property type="match status" value="1"/>
</dbReference>
<dbReference type="PROSITE" id="PS50011">
    <property type="entry name" value="PROTEIN_KINASE_DOM"/>
    <property type="match status" value="1"/>
</dbReference>
<dbReference type="PROSITE" id="PS00109">
    <property type="entry name" value="PROTEIN_KINASE_TYR"/>
    <property type="match status" value="1"/>
</dbReference>
<dbReference type="PROSITE" id="PS50001">
    <property type="entry name" value="SH2"/>
    <property type="match status" value="1"/>
</dbReference>
<dbReference type="PROSITE" id="PS50002">
    <property type="entry name" value="SH3"/>
    <property type="match status" value="1"/>
</dbReference>
<proteinExistence type="evidence at protein level"/>
<comment type="function">
    <text evidence="7">Non-receptor tyrosine-protein kinase that negatively regulates cell proliferation. Positively regulates PTEN protein stability through phosphorylation of PTEN on 'Tyr-336', which in turn prevents its ubiquitination and degradation, possibly by reducing its binding to NEDD4. May function as a tumor suppressor.</text>
</comment>
<comment type="catalytic activity">
    <reaction evidence="5">
        <text>L-tyrosyl-[protein] + ATP = O-phospho-L-tyrosyl-[protein] + ADP + H(+)</text>
        <dbReference type="Rhea" id="RHEA:10596"/>
        <dbReference type="Rhea" id="RHEA-COMP:10136"/>
        <dbReference type="Rhea" id="RHEA-COMP:20101"/>
        <dbReference type="ChEBI" id="CHEBI:15378"/>
        <dbReference type="ChEBI" id="CHEBI:30616"/>
        <dbReference type="ChEBI" id="CHEBI:46858"/>
        <dbReference type="ChEBI" id="CHEBI:61978"/>
        <dbReference type="ChEBI" id="CHEBI:456216"/>
        <dbReference type="EC" id="2.7.10.2"/>
    </reaction>
</comment>
<comment type="subunit">
    <text evidence="7 8">Interacts (via the SH3-domain) with PTEN. Interacts with RB1.</text>
</comment>
<comment type="interaction">
    <interactant intactId="EBI-1383583">
        <id>P42685</id>
    </interactant>
    <interactant intactId="EBI-752094">
        <id>Q12982</id>
        <label>BNIP2</label>
    </interactant>
    <organismsDiffer>false</organismsDiffer>
    <experiments>8</experiments>
</comment>
<comment type="interaction">
    <interactant intactId="EBI-1383583">
        <id>P42685</id>
    </interactant>
    <interactant intactId="EBI-696162">
        <id>P60484</id>
        <label>PTEN</label>
    </interactant>
    <organismsDiffer>false</organismsDiffer>
    <experiments>7</experiments>
</comment>
<comment type="interaction">
    <interactant intactId="EBI-1383583">
        <id>P42685</id>
    </interactant>
    <interactant intactId="EBI-491274">
        <id>P06400</id>
        <label>RB1</label>
    </interactant>
    <organismsDiffer>false</organismsDiffer>
    <experiments>3</experiments>
</comment>
<comment type="interaction">
    <interactant intactId="EBI-1383583">
        <id>P42685</id>
    </interactant>
    <interactant intactId="EBI-348469">
        <id>Q15427</id>
        <label>SF3B4</label>
    </interactant>
    <organismsDiffer>false</organismsDiffer>
    <experiments>4</experiments>
</comment>
<comment type="subcellular location">
    <subcellularLocation>
        <location evidence="9">Cytoplasm</location>
    </subcellularLocation>
    <subcellularLocation>
        <location evidence="9">Nucleus</location>
    </subcellularLocation>
    <text>Predominantly found in the nucleus, with a small fraction found in the cell periphery.</text>
</comment>
<comment type="alternative products">
    <event type="alternative splicing"/>
    <isoform>
        <id>P42685-1</id>
        <name>1</name>
        <sequence type="displayed"/>
    </isoform>
    <isoform>
        <id>P42685-2</id>
        <name>2</name>
        <sequence type="described" ref="VSP_056496 VSP_056497"/>
    </isoform>
</comment>
<comment type="tissue specificity">
    <text evidence="9">Predominantly expressed in epithelial derived cell lines and tissues, especially normal liver, kidney, breast and colon.</text>
</comment>
<comment type="similarity">
    <text evidence="2">Belongs to the protein kinase superfamily. Tyr protein kinase family. SRC subfamily.</text>
</comment>
<name>FRK_HUMAN</name>
<protein>
    <recommendedName>
        <fullName>Tyrosine-protein kinase FRK</fullName>
        <ecNumber>2.7.10.2</ecNumber>
    </recommendedName>
    <alternativeName>
        <fullName>FYN-related kinase</fullName>
    </alternativeName>
    <alternativeName>
        <fullName>Nuclear tyrosine protein kinase RAK</fullName>
    </alternativeName>
    <alternativeName>
        <fullName>Protein-tyrosine kinase 5</fullName>
    </alternativeName>
</protein>